<proteinExistence type="inferred from homology"/>
<sequence>MRDAWRFAVGTLTALPVRPPTRVDRDTARRAMLLAPLAALPLGLLVAAVLAAGRAVELPPLAVGLLAVGALAASSRALHWDGLSDTVDGLAASYDPARSLAVMRSGTSGPAGVLATVVVAGVQAAALATLLDQPLLAGALVCLSRCALWIVCCTRVPAARADGLGADVARTVPLPVAVLGGLLLSAVGGLVVLVLVRRTVRRFGGVTGDVMGAAVELALAATLLAWAAR</sequence>
<reference key="1">
    <citation type="submission" date="2006-12" db="EMBL/GenBank/DDBJ databases">
        <title>Complete sequence of chromosome 1 of Nocardioides sp. JS614.</title>
        <authorList>
            <person name="Copeland A."/>
            <person name="Lucas S."/>
            <person name="Lapidus A."/>
            <person name="Barry K."/>
            <person name="Detter J.C."/>
            <person name="Glavina del Rio T."/>
            <person name="Hammon N."/>
            <person name="Israni S."/>
            <person name="Dalin E."/>
            <person name="Tice H."/>
            <person name="Pitluck S."/>
            <person name="Thompson L.S."/>
            <person name="Brettin T."/>
            <person name="Bruce D."/>
            <person name="Han C."/>
            <person name="Tapia R."/>
            <person name="Schmutz J."/>
            <person name="Larimer F."/>
            <person name="Land M."/>
            <person name="Hauser L."/>
            <person name="Kyrpides N."/>
            <person name="Kim E."/>
            <person name="Mattes T."/>
            <person name="Gossett J."/>
            <person name="Richardson P."/>
        </authorList>
    </citation>
    <scope>NUCLEOTIDE SEQUENCE [LARGE SCALE GENOMIC DNA]</scope>
    <source>
        <strain>ATCC BAA-499 / JS614</strain>
    </source>
</reference>
<protein>
    <recommendedName>
        <fullName evidence="1">Adenosylcobinamide-GDP ribazoletransferase</fullName>
        <ecNumber evidence="1">2.7.8.26</ecNumber>
    </recommendedName>
    <alternativeName>
        <fullName evidence="1">Cobalamin synthase</fullName>
    </alternativeName>
    <alternativeName>
        <fullName evidence="1">Cobalamin-5'-phosphate synthase</fullName>
    </alternativeName>
</protein>
<accession>A1SJN0</accession>
<organism>
    <name type="scientific">Nocardioides sp. (strain ATCC BAA-499 / JS614)</name>
    <dbReference type="NCBI Taxonomy" id="196162"/>
    <lineage>
        <taxon>Bacteria</taxon>
        <taxon>Bacillati</taxon>
        <taxon>Actinomycetota</taxon>
        <taxon>Actinomycetes</taxon>
        <taxon>Propionibacteriales</taxon>
        <taxon>Nocardioidaceae</taxon>
        <taxon>Nocardioides</taxon>
    </lineage>
</organism>
<dbReference type="EC" id="2.7.8.26" evidence="1"/>
<dbReference type="EMBL" id="CP000509">
    <property type="protein sequence ID" value="ABL82015.1"/>
    <property type="molecule type" value="Genomic_DNA"/>
</dbReference>
<dbReference type="RefSeq" id="WP_011755956.1">
    <property type="nucleotide sequence ID" value="NC_008699.1"/>
</dbReference>
<dbReference type="STRING" id="196162.Noca_2511"/>
<dbReference type="KEGG" id="nca:Noca_2511"/>
<dbReference type="eggNOG" id="COG0368">
    <property type="taxonomic scope" value="Bacteria"/>
</dbReference>
<dbReference type="HOGENOM" id="CLU_057426_0_1_11"/>
<dbReference type="OrthoDB" id="9794223at2"/>
<dbReference type="UniPathway" id="UPA00148">
    <property type="reaction ID" value="UER00238"/>
</dbReference>
<dbReference type="Proteomes" id="UP000000640">
    <property type="component" value="Chromosome"/>
</dbReference>
<dbReference type="GO" id="GO:0005886">
    <property type="term" value="C:plasma membrane"/>
    <property type="evidence" value="ECO:0007669"/>
    <property type="project" value="UniProtKB-SubCell"/>
</dbReference>
<dbReference type="GO" id="GO:0051073">
    <property type="term" value="F:adenosylcobinamide-GDP ribazoletransferase activity"/>
    <property type="evidence" value="ECO:0007669"/>
    <property type="project" value="UniProtKB-UniRule"/>
</dbReference>
<dbReference type="GO" id="GO:0008818">
    <property type="term" value="F:cobalamin 5'-phosphate synthase activity"/>
    <property type="evidence" value="ECO:0007669"/>
    <property type="project" value="UniProtKB-UniRule"/>
</dbReference>
<dbReference type="GO" id="GO:0009236">
    <property type="term" value="P:cobalamin biosynthetic process"/>
    <property type="evidence" value="ECO:0007669"/>
    <property type="project" value="UniProtKB-UniRule"/>
</dbReference>
<dbReference type="HAMAP" id="MF_00719">
    <property type="entry name" value="CobS"/>
    <property type="match status" value="1"/>
</dbReference>
<dbReference type="InterPro" id="IPR003805">
    <property type="entry name" value="CobS"/>
</dbReference>
<dbReference type="PANTHER" id="PTHR34148">
    <property type="entry name" value="ADENOSYLCOBINAMIDE-GDP RIBAZOLETRANSFERASE"/>
    <property type="match status" value="1"/>
</dbReference>
<dbReference type="PANTHER" id="PTHR34148:SF1">
    <property type="entry name" value="ADENOSYLCOBINAMIDE-GDP RIBAZOLETRANSFERASE"/>
    <property type="match status" value="1"/>
</dbReference>
<dbReference type="Pfam" id="PF02654">
    <property type="entry name" value="CobS"/>
    <property type="match status" value="1"/>
</dbReference>
<gene>
    <name evidence="1" type="primary">cobS</name>
    <name type="ordered locus">Noca_2511</name>
</gene>
<name>COBS_NOCSJ</name>
<evidence type="ECO:0000255" key="1">
    <source>
        <dbReference type="HAMAP-Rule" id="MF_00719"/>
    </source>
</evidence>
<comment type="function">
    <text evidence="1">Joins adenosylcobinamide-GDP and alpha-ribazole to generate adenosylcobalamin (Ado-cobalamin). Also synthesizes adenosylcobalamin 5'-phosphate from adenosylcobinamide-GDP and alpha-ribazole 5'-phosphate.</text>
</comment>
<comment type="catalytic activity">
    <reaction evidence="1">
        <text>alpha-ribazole + adenosylcob(III)inamide-GDP = adenosylcob(III)alamin + GMP + H(+)</text>
        <dbReference type="Rhea" id="RHEA:16049"/>
        <dbReference type="ChEBI" id="CHEBI:10329"/>
        <dbReference type="ChEBI" id="CHEBI:15378"/>
        <dbReference type="ChEBI" id="CHEBI:18408"/>
        <dbReference type="ChEBI" id="CHEBI:58115"/>
        <dbReference type="ChEBI" id="CHEBI:60487"/>
        <dbReference type="EC" id="2.7.8.26"/>
    </reaction>
</comment>
<comment type="catalytic activity">
    <reaction evidence="1">
        <text>alpha-ribazole 5'-phosphate + adenosylcob(III)inamide-GDP = adenosylcob(III)alamin 5'-phosphate + GMP + H(+)</text>
        <dbReference type="Rhea" id="RHEA:23560"/>
        <dbReference type="ChEBI" id="CHEBI:15378"/>
        <dbReference type="ChEBI" id="CHEBI:57918"/>
        <dbReference type="ChEBI" id="CHEBI:58115"/>
        <dbReference type="ChEBI" id="CHEBI:60487"/>
        <dbReference type="ChEBI" id="CHEBI:60493"/>
        <dbReference type="EC" id="2.7.8.26"/>
    </reaction>
</comment>
<comment type="cofactor">
    <cofactor evidence="1">
        <name>Mg(2+)</name>
        <dbReference type="ChEBI" id="CHEBI:18420"/>
    </cofactor>
</comment>
<comment type="pathway">
    <text evidence="1">Cofactor biosynthesis; adenosylcobalamin biosynthesis; adenosylcobalamin from cob(II)yrinate a,c-diamide: step 7/7.</text>
</comment>
<comment type="subcellular location">
    <subcellularLocation>
        <location evidence="1">Cell membrane</location>
        <topology evidence="1">Multi-pass membrane protein</topology>
    </subcellularLocation>
</comment>
<comment type="similarity">
    <text evidence="1">Belongs to the CobS family.</text>
</comment>
<keyword id="KW-1003">Cell membrane</keyword>
<keyword id="KW-0169">Cobalamin biosynthesis</keyword>
<keyword id="KW-0460">Magnesium</keyword>
<keyword id="KW-0472">Membrane</keyword>
<keyword id="KW-1185">Reference proteome</keyword>
<keyword id="KW-0808">Transferase</keyword>
<keyword id="KW-0812">Transmembrane</keyword>
<keyword id="KW-1133">Transmembrane helix</keyword>
<feature type="chain" id="PRO_1000132589" description="Adenosylcobinamide-GDP ribazoletransferase">
    <location>
        <begin position="1"/>
        <end position="229"/>
    </location>
</feature>
<feature type="transmembrane region" description="Helical" evidence="1">
    <location>
        <begin position="31"/>
        <end position="51"/>
    </location>
</feature>
<feature type="transmembrane region" description="Helical" evidence="1">
    <location>
        <begin position="55"/>
        <end position="75"/>
    </location>
</feature>
<feature type="transmembrane region" description="Helical" evidence="1">
    <location>
        <begin position="111"/>
        <end position="131"/>
    </location>
</feature>
<feature type="transmembrane region" description="Helical" evidence="1">
    <location>
        <begin position="134"/>
        <end position="154"/>
    </location>
</feature>
<feature type="transmembrane region" description="Helical" evidence="1">
    <location>
        <begin position="176"/>
        <end position="196"/>
    </location>
</feature>
<feature type="transmembrane region" description="Helical" evidence="1">
    <location>
        <begin position="208"/>
        <end position="228"/>
    </location>
</feature>